<evidence type="ECO:0000255" key="1">
    <source>
        <dbReference type="HAMAP-Rule" id="MF_01255"/>
    </source>
</evidence>
<accession>Q5YW76</accession>
<proteinExistence type="inferred from homology"/>
<sequence length="131" mass="14604">MIVRTTDEITGTERDVAGPGWRSKRIVLGGDGVGFSFHETTIDAGTTHEFHYVHHIEAVWLVEGEGTLTDLDNDQVYDLRPGTMYLLNGHEKHRVQARTTMRMMCVFNPPVTGQEVHDENGVYPLVAVPAS</sequence>
<protein>
    <recommendedName>
        <fullName evidence="1">L-ectoine synthase</fullName>
        <ecNumber evidence="1">4.2.1.108</ecNumber>
    </recommendedName>
    <alternativeName>
        <fullName evidence="1">N-acetyldiaminobutyrate dehydratase</fullName>
    </alternativeName>
</protein>
<reference key="1">
    <citation type="journal article" date="2004" name="Proc. Natl. Acad. Sci. U.S.A.">
        <title>The complete genomic sequence of Nocardia farcinica IFM 10152.</title>
        <authorList>
            <person name="Ishikawa J."/>
            <person name="Yamashita A."/>
            <person name="Mikami Y."/>
            <person name="Hoshino Y."/>
            <person name="Kurita H."/>
            <person name="Hotta K."/>
            <person name="Shiba T."/>
            <person name="Hattori M."/>
        </authorList>
    </citation>
    <scope>NUCLEOTIDE SEQUENCE [LARGE SCALE GENOMIC DNA]</scope>
    <source>
        <strain>IFM 10152</strain>
    </source>
</reference>
<name>ECTC_NOCFA</name>
<dbReference type="EC" id="4.2.1.108" evidence="1"/>
<dbReference type="EMBL" id="AP006618">
    <property type="protein sequence ID" value="BAD57565.1"/>
    <property type="molecule type" value="Genomic_DNA"/>
</dbReference>
<dbReference type="RefSeq" id="WP_011209250.1">
    <property type="nucleotide sequence ID" value="NC_006361.1"/>
</dbReference>
<dbReference type="SMR" id="Q5YW76"/>
<dbReference type="STRING" id="247156.NFA_27180"/>
<dbReference type="GeneID" id="61133457"/>
<dbReference type="KEGG" id="nfa:NFA_27180"/>
<dbReference type="eggNOG" id="COG1917">
    <property type="taxonomic scope" value="Bacteria"/>
</dbReference>
<dbReference type="HOGENOM" id="CLU_154525_0_0_11"/>
<dbReference type="OrthoDB" id="4406415at2"/>
<dbReference type="UniPathway" id="UPA00067">
    <property type="reaction ID" value="UER00123"/>
</dbReference>
<dbReference type="Proteomes" id="UP000006820">
    <property type="component" value="Chromosome"/>
</dbReference>
<dbReference type="GO" id="GO:0033990">
    <property type="term" value="F:ectoine synthase activity"/>
    <property type="evidence" value="ECO:0007669"/>
    <property type="project" value="UniProtKB-EC"/>
</dbReference>
<dbReference type="GO" id="GO:0019491">
    <property type="term" value="P:ectoine biosynthetic process"/>
    <property type="evidence" value="ECO:0007669"/>
    <property type="project" value="UniProtKB-UniRule"/>
</dbReference>
<dbReference type="CDD" id="cd06978">
    <property type="entry name" value="cupin_EctC"/>
    <property type="match status" value="1"/>
</dbReference>
<dbReference type="Gene3D" id="2.60.120.10">
    <property type="entry name" value="Jelly Rolls"/>
    <property type="match status" value="1"/>
</dbReference>
<dbReference type="HAMAP" id="MF_01255">
    <property type="entry name" value="Ectoine_synth"/>
    <property type="match status" value="1"/>
</dbReference>
<dbReference type="InterPro" id="IPR010462">
    <property type="entry name" value="Ectoine_synth"/>
</dbReference>
<dbReference type="InterPro" id="IPR014710">
    <property type="entry name" value="RmlC-like_jellyroll"/>
</dbReference>
<dbReference type="InterPro" id="IPR011051">
    <property type="entry name" value="RmlC_Cupin_sf"/>
</dbReference>
<dbReference type="NCBIfam" id="NF009806">
    <property type="entry name" value="PRK13290.1"/>
    <property type="match status" value="1"/>
</dbReference>
<dbReference type="PANTHER" id="PTHR39289">
    <property type="match status" value="1"/>
</dbReference>
<dbReference type="PANTHER" id="PTHR39289:SF1">
    <property type="entry name" value="L-ECTOINE SYNTHASE"/>
    <property type="match status" value="1"/>
</dbReference>
<dbReference type="Pfam" id="PF06339">
    <property type="entry name" value="Ectoine_synth"/>
    <property type="match status" value="1"/>
</dbReference>
<dbReference type="SUPFAM" id="SSF51182">
    <property type="entry name" value="RmlC-like cupins"/>
    <property type="match status" value="1"/>
</dbReference>
<comment type="function">
    <text evidence="1">Catalyzes the circularization of gamma-N-acetyl-alpha,gamma-diaminobutyric acid (ADABA) to ectoine (1,4,5,6-tetrahydro-2-methyl-4-pyrimidine carboxylic acid), which is an excellent osmoprotectant.</text>
</comment>
<comment type="catalytic activity">
    <reaction evidence="1">
        <text>(2S)-4-acetamido-2-aminobutanoate = L-ectoine + H2O</text>
        <dbReference type="Rhea" id="RHEA:17281"/>
        <dbReference type="ChEBI" id="CHEBI:15377"/>
        <dbReference type="ChEBI" id="CHEBI:58515"/>
        <dbReference type="ChEBI" id="CHEBI:58929"/>
        <dbReference type="EC" id="4.2.1.108"/>
    </reaction>
</comment>
<comment type="pathway">
    <text evidence="1">Amine and polyamine biosynthesis; ectoine biosynthesis; L-ectoine from L-aspartate 4-semialdehyde: step 3/3.</text>
</comment>
<comment type="similarity">
    <text evidence="1">Belongs to the ectoine synthase family.</text>
</comment>
<organism>
    <name type="scientific">Nocardia farcinica (strain IFM 10152)</name>
    <dbReference type="NCBI Taxonomy" id="247156"/>
    <lineage>
        <taxon>Bacteria</taxon>
        <taxon>Bacillati</taxon>
        <taxon>Actinomycetota</taxon>
        <taxon>Actinomycetes</taxon>
        <taxon>Mycobacteriales</taxon>
        <taxon>Nocardiaceae</taxon>
        <taxon>Nocardia</taxon>
    </lineage>
</organism>
<feature type="chain" id="PRO_0000220154" description="L-ectoine synthase">
    <location>
        <begin position="1"/>
        <end position="131"/>
    </location>
</feature>
<gene>
    <name evidence="1" type="primary">ectC</name>
    <name type="ordered locus">NFA_27180</name>
</gene>
<keyword id="KW-0456">Lyase</keyword>
<keyword id="KW-1185">Reference proteome</keyword>